<proteinExistence type="inferred from homology"/>
<protein>
    <recommendedName>
        <fullName evidence="1">Photosystem II protein D1</fullName>
        <shortName evidence="1">PSII D1 protein</shortName>
        <ecNumber evidence="1">1.10.3.9</ecNumber>
    </recommendedName>
    <alternativeName>
        <fullName evidence="1">Photosystem II Q(B) protein</fullName>
    </alternativeName>
</protein>
<reference key="1">
    <citation type="journal article" date="2007" name="PLoS Genet.">
        <title>Patterns and implications of gene gain and loss in the evolution of Prochlorococcus.</title>
        <authorList>
            <person name="Kettler G.C."/>
            <person name="Martiny A.C."/>
            <person name="Huang K."/>
            <person name="Zucker J."/>
            <person name="Coleman M.L."/>
            <person name="Rodrigue S."/>
            <person name="Chen F."/>
            <person name="Lapidus A."/>
            <person name="Ferriera S."/>
            <person name="Johnson J."/>
            <person name="Steglich C."/>
            <person name="Church G.M."/>
            <person name="Richardson P."/>
            <person name="Chisholm S.W."/>
        </authorList>
    </citation>
    <scope>NUCLEOTIDE SEQUENCE [LARGE SCALE GENOMIC DNA]</scope>
    <source>
        <strain>MIT 9301</strain>
    </source>
</reference>
<keyword id="KW-0106">Calcium</keyword>
<keyword id="KW-0148">Chlorophyll</keyword>
<keyword id="KW-0157">Chromophore</keyword>
<keyword id="KW-0249">Electron transport</keyword>
<keyword id="KW-0359">Herbicide resistance</keyword>
<keyword id="KW-0408">Iron</keyword>
<keyword id="KW-0460">Magnesium</keyword>
<keyword id="KW-0464">Manganese</keyword>
<keyword id="KW-0472">Membrane</keyword>
<keyword id="KW-0479">Metal-binding</keyword>
<keyword id="KW-0560">Oxidoreductase</keyword>
<keyword id="KW-0602">Photosynthesis</keyword>
<keyword id="KW-0604">Photosystem II</keyword>
<keyword id="KW-1185">Reference proteome</keyword>
<keyword id="KW-0793">Thylakoid</keyword>
<keyword id="KW-0812">Transmembrane</keyword>
<keyword id="KW-1133">Transmembrane helix</keyword>
<keyword id="KW-0813">Transport</keyword>
<name>PSBA_PROM0</name>
<feature type="chain" id="PRO_0000316357" description="Photosystem II protein D1" evidence="1">
    <location>
        <begin position="1"/>
        <end position="345"/>
    </location>
</feature>
<feature type="propeptide" id="PRO_0000316358" evidence="1">
    <location>
        <begin position="346"/>
        <end position="360"/>
    </location>
</feature>
<feature type="transmembrane region" description="Helical" evidence="1">
    <location>
        <begin position="30"/>
        <end position="47"/>
    </location>
</feature>
<feature type="transmembrane region" description="Helical" evidence="1">
    <location>
        <begin position="119"/>
        <end position="134"/>
    </location>
</feature>
<feature type="transmembrane region" description="Helical" evidence="1">
    <location>
        <begin position="143"/>
        <end position="157"/>
    </location>
</feature>
<feature type="transmembrane region" description="Helical" evidence="1">
    <location>
        <begin position="198"/>
        <end position="219"/>
    </location>
</feature>
<feature type="transmembrane region" description="Helical" evidence="1">
    <location>
        <begin position="275"/>
        <end position="289"/>
    </location>
</feature>
<feature type="binding site" description="axial binding residue" evidence="1">
    <location>
        <position position="119"/>
    </location>
    <ligand>
        <name>chlorophyll a</name>
        <dbReference type="ChEBI" id="CHEBI:58416"/>
        <label>ChlzD1</label>
    </ligand>
    <ligandPart>
        <name>Mg</name>
        <dbReference type="ChEBI" id="CHEBI:25107"/>
    </ligandPart>
</feature>
<feature type="binding site" evidence="1">
    <location>
        <position position="127"/>
    </location>
    <ligand>
        <name>pheophytin a</name>
        <dbReference type="ChEBI" id="CHEBI:136840"/>
        <label>D1</label>
    </ligand>
</feature>
<feature type="binding site" evidence="1">
    <location>
        <position position="171"/>
    </location>
    <ligand>
        <name>[CaMn4O5] cluster</name>
        <dbReference type="ChEBI" id="CHEBI:189552"/>
    </ligand>
</feature>
<feature type="binding site" evidence="1">
    <location>
        <position position="190"/>
    </location>
    <ligand>
        <name>[CaMn4O5] cluster</name>
        <dbReference type="ChEBI" id="CHEBI:189552"/>
    </ligand>
</feature>
<feature type="binding site" description="axial binding residue" evidence="1">
    <location>
        <position position="199"/>
    </location>
    <ligand>
        <name>chlorophyll a</name>
        <dbReference type="ChEBI" id="CHEBI:58416"/>
        <label>PD1</label>
    </ligand>
    <ligandPart>
        <name>Mg</name>
        <dbReference type="ChEBI" id="CHEBI:25107"/>
    </ligandPart>
</feature>
<feature type="binding site" evidence="1">
    <location>
        <position position="216"/>
    </location>
    <ligand>
        <name>a quinone</name>
        <dbReference type="ChEBI" id="CHEBI:132124"/>
        <label>B</label>
    </ligand>
</feature>
<feature type="binding site" evidence="1">
    <location>
        <position position="216"/>
    </location>
    <ligand>
        <name>Fe cation</name>
        <dbReference type="ChEBI" id="CHEBI:24875"/>
        <note>ligand shared with heterodimeric partner</note>
    </ligand>
</feature>
<feature type="binding site" evidence="1">
    <location>
        <begin position="265"/>
        <end position="266"/>
    </location>
    <ligand>
        <name>a quinone</name>
        <dbReference type="ChEBI" id="CHEBI:132124"/>
        <label>B</label>
    </ligand>
</feature>
<feature type="binding site" evidence="1">
    <location>
        <position position="273"/>
    </location>
    <ligand>
        <name>Fe cation</name>
        <dbReference type="ChEBI" id="CHEBI:24875"/>
        <note>ligand shared with heterodimeric partner</note>
    </ligand>
</feature>
<feature type="binding site" evidence="1">
    <location>
        <position position="333"/>
    </location>
    <ligand>
        <name>[CaMn4O5] cluster</name>
        <dbReference type="ChEBI" id="CHEBI:189552"/>
    </ligand>
</feature>
<feature type="binding site" evidence="1">
    <location>
        <position position="334"/>
    </location>
    <ligand>
        <name>[CaMn4O5] cluster</name>
        <dbReference type="ChEBI" id="CHEBI:189552"/>
    </ligand>
</feature>
<feature type="binding site" evidence="1">
    <location>
        <position position="343"/>
    </location>
    <ligand>
        <name>[CaMn4O5] cluster</name>
        <dbReference type="ChEBI" id="CHEBI:189552"/>
    </ligand>
</feature>
<feature type="binding site" evidence="1">
    <location>
        <position position="345"/>
    </location>
    <ligand>
        <name>[CaMn4O5] cluster</name>
        <dbReference type="ChEBI" id="CHEBI:189552"/>
    </ligand>
</feature>
<feature type="site" description="Tyrosine radical intermediate" evidence="1">
    <location>
        <position position="162"/>
    </location>
</feature>
<feature type="site" description="Stabilizes free radical intermediate" evidence="1">
    <location>
        <position position="191"/>
    </location>
</feature>
<feature type="site" description="Cleavage; by CtpA" evidence="1">
    <location>
        <begin position="345"/>
        <end position="346"/>
    </location>
</feature>
<organism>
    <name type="scientific">Prochlorococcus marinus (strain MIT 9301)</name>
    <dbReference type="NCBI Taxonomy" id="167546"/>
    <lineage>
        <taxon>Bacteria</taxon>
        <taxon>Bacillati</taxon>
        <taxon>Cyanobacteriota</taxon>
        <taxon>Cyanophyceae</taxon>
        <taxon>Synechococcales</taxon>
        <taxon>Prochlorococcaceae</taxon>
        <taxon>Prochlorococcus</taxon>
    </lineage>
</organism>
<gene>
    <name evidence="1" type="primary">psbA</name>
    <name type="ordered locus">P9301_02451</name>
</gene>
<accession>A3PAU3</accession>
<sequence length="360" mass="39638">MTTIQQQRSSLLKGWPQFCEWVTSTNNRIYVGWFGVLMIPCLLTAAACFIVAFIAAPPVDIDGIREPVAGSFLYGNNIISGAVVPSSNAIGLHFYPIWEAATVDEWLYNGGPYQLVIFHFLIGISAYMGRQWELSYRLGMRPWICVAYSAPVSAAFAVFLVYPFGQGSFSDGMPLGISGTFNFMFVFQAEHNILMHPFHMAGVAGMFGGSLFSAMHGSLVTSSLIRETTETESQNYGYKFGQEEETYNIVAAHGYFGRLIFQYASFNNSRSLHFFLAVFPVVCVWLTSMGICTMAFNLNGFNFNQSVVDANGKIVPTWGDVLNRANLGMEVMHERNAHNFPLDLAAAESTTVALSAPAIG</sequence>
<comment type="function">
    <text evidence="1">Photosystem II (PSII) is a light-driven water:plastoquinone oxidoreductase that uses light energy to abstract electrons from H(2)O, generating O(2) and a proton gradient subsequently used for ATP formation. It consists of a core antenna complex that captures photons, and an electron transfer chain that converts photonic excitation into a charge separation. The D1/D2 (PsbA/PsbD) reaction center heterodimer binds P680, the primary electron donor of PSII as well as several subsequent electron acceptors.</text>
</comment>
<comment type="catalytic activity">
    <reaction evidence="1">
        <text>2 a plastoquinone + 4 hnu + 2 H2O = 2 a plastoquinol + O2</text>
        <dbReference type="Rhea" id="RHEA:36359"/>
        <dbReference type="Rhea" id="RHEA-COMP:9561"/>
        <dbReference type="Rhea" id="RHEA-COMP:9562"/>
        <dbReference type="ChEBI" id="CHEBI:15377"/>
        <dbReference type="ChEBI" id="CHEBI:15379"/>
        <dbReference type="ChEBI" id="CHEBI:17757"/>
        <dbReference type="ChEBI" id="CHEBI:30212"/>
        <dbReference type="ChEBI" id="CHEBI:62192"/>
        <dbReference type="EC" id="1.10.3.9"/>
    </reaction>
</comment>
<comment type="cofactor">
    <text evidence="1">The D1/D2 heterodimer binds P680, chlorophylls that are the primary electron donor of PSII, and subsequent electron acceptors. It shares a non-heme iron and each subunit binds pheophytin, quinone, additional chlorophylls, carotenoids and lipids. D1 provides most of the ligands for the Mn4-Ca-O5 cluster of the oxygen-evolving complex (OEC). There is also a Cl(-1) ion associated with D1 and D2, which is required for oxygen evolution. The PSII complex binds additional chlorophylls, carotenoids and specific lipids.</text>
</comment>
<comment type="subunit">
    <text evidence="2">PSII is composed of 1 copy each of membrane proteins PsbA, PsbB, PsbC, PsbD, PsbE, PsbF, PsbH, PsbI, PsbJ, PsbK, PsbL, PsbM, PsbT, PsbX, PsbY, Psb30/Ycf12, peripheral proteins PsbO, CyanoQ (PsbQ), PsbU, PsbV and a large number of cofactors. It forms dimeric complexes.</text>
</comment>
<comment type="subcellular location">
    <subcellularLocation>
        <location evidence="1">Cellular thylakoid membrane</location>
        <topology evidence="1">Multi-pass membrane protein</topology>
    </subcellularLocation>
</comment>
<comment type="PTM">
    <text evidence="1">Tyr-162 forms a radical intermediate that is referred to as redox-active TyrZ, YZ or Y-Z.</text>
</comment>
<comment type="PTM">
    <text evidence="1">C-terminally processed by CtpA; processing is essential to allow assembly of the oxygen-evolving complex and thus photosynthetic growth.</text>
</comment>
<comment type="miscellaneous">
    <text evidence="1">Cyanobacteria usually contain more than 2 copies of the psbA gene.</text>
</comment>
<comment type="miscellaneous">
    <text evidence="1">2 of the reaction center chlorophylls (ChlD1 and ChlD2) are entirely coordinated by water.</text>
</comment>
<comment type="miscellaneous">
    <text evidence="1">Herbicides such as atrazine, BNT, diuron or ioxynil bind in the Q(B) binding site and block subsequent electron transfer.</text>
</comment>
<comment type="similarity">
    <text evidence="1">Belongs to the reaction center PufL/M/PsbA/D family.</text>
</comment>
<dbReference type="EC" id="1.10.3.9" evidence="1"/>
<dbReference type="EMBL" id="CP000576">
    <property type="protein sequence ID" value="ABO16868.1"/>
    <property type="molecule type" value="Genomic_DNA"/>
</dbReference>
<dbReference type="RefSeq" id="WP_002805533.1">
    <property type="nucleotide sequence ID" value="NC_009091.1"/>
</dbReference>
<dbReference type="SMR" id="A3PAU3"/>
<dbReference type="STRING" id="167546.P9301_02451"/>
<dbReference type="KEGG" id="pmg:P9301_02451"/>
<dbReference type="eggNOG" id="ENOG502Z87P">
    <property type="taxonomic scope" value="Bacteria"/>
</dbReference>
<dbReference type="HOGENOM" id="CLU_054206_1_0_3"/>
<dbReference type="OrthoDB" id="505356at2"/>
<dbReference type="Proteomes" id="UP000001430">
    <property type="component" value="Chromosome"/>
</dbReference>
<dbReference type="GO" id="GO:0009523">
    <property type="term" value="C:photosystem II"/>
    <property type="evidence" value="ECO:0007669"/>
    <property type="project" value="UniProtKB-KW"/>
</dbReference>
<dbReference type="GO" id="GO:0031676">
    <property type="term" value="C:plasma membrane-derived thylakoid membrane"/>
    <property type="evidence" value="ECO:0007669"/>
    <property type="project" value="UniProtKB-SubCell"/>
</dbReference>
<dbReference type="GO" id="GO:0016168">
    <property type="term" value="F:chlorophyll binding"/>
    <property type="evidence" value="ECO:0007669"/>
    <property type="project" value="UniProtKB-UniRule"/>
</dbReference>
<dbReference type="GO" id="GO:0045156">
    <property type="term" value="F:electron transporter, transferring electrons within the cyclic electron transport pathway of photosynthesis activity"/>
    <property type="evidence" value="ECO:0007669"/>
    <property type="project" value="InterPro"/>
</dbReference>
<dbReference type="GO" id="GO:0005506">
    <property type="term" value="F:iron ion binding"/>
    <property type="evidence" value="ECO:0007669"/>
    <property type="project" value="UniProtKB-UniRule"/>
</dbReference>
<dbReference type="GO" id="GO:0016682">
    <property type="term" value="F:oxidoreductase activity, acting on diphenols and related substances as donors, oxygen as acceptor"/>
    <property type="evidence" value="ECO:0007669"/>
    <property type="project" value="UniProtKB-UniRule"/>
</dbReference>
<dbReference type="GO" id="GO:0010242">
    <property type="term" value="F:oxygen evolving activity"/>
    <property type="evidence" value="ECO:0007669"/>
    <property type="project" value="UniProtKB-EC"/>
</dbReference>
<dbReference type="GO" id="GO:0009772">
    <property type="term" value="P:photosynthetic electron transport in photosystem II"/>
    <property type="evidence" value="ECO:0007669"/>
    <property type="project" value="InterPro"/>
</dbReference>
<dbReference type="GO" id="GO:0009635">
    <property type="term" value="P:response to herbicide"/>
    <property type="evidence" value="ECO:0007669"/>
    <property type="project" value="UniProtKB-KW"/>
</dbReference>
<dbReference type="FunFam" id="1.20.85.10:FF:000002">
    <property type="entry name" value="Photosystem II protein D1"/>
    <property type="match status" value="1"/>
</dbReference>
<dbReference type="Gene3D" id="1.20.85.10">
    <property type="entry name" value="Photosystem II protein D1-like"/>
    <property type="match status" value="1"/>
</dbReference>
<dbReference type="HAMAP" id="MF_01379">
    <property type="entry name" value="PSII_PsbA_D1"/>
    <property type="match status" value="1"/>
</dbReference>
<dbReference type="InterPro" id="IPR055266">
    <property type="entry name" value="D1/D2"/>
</dbReference>
<dbReference type="InterPro" id="IPR036854">
    <property type="entry name" value="Photo_II_D1/D2_sf"/>
</dbReference>
<dbReference type="InterPro" id="IPR000484">
    <property type="entry name" value="Photo_RC_L/M"/>
</dbReference>
<dbReference type="InterPro" id="IPR055265">
    <property type="entry name" value="Photo_RC_L/M_CS"/>
</dbReference>
<dbReference type="InterPro" id="IPR005867">
    <property type="entry name" value="PSII_D1"/>
</dbReference>
<dbReference type="NCBIfam" id="TIGR01151">
    <property type="entry name" value="psbA"/>
    <property type="match status" value="1"/>
</dbReference>
<dbReference type="PANTHER" id="PTHR33149:SF12">
    <property type="entry name" value="PHOTOSYSTEM II D2 PROTEIN"/>
    <property type="match status" value="1"/>
</dbReference>
<dbReference type="PANTHER" id="PTHR33149">
    <property type="entry name" value="PHOTOSYSTEM II PROTEIN D1"/>
    <property type="match status" value="1"/>
</dbReference>
<dbReference type="Pfam" id="PF00124">
    <property type="entry name" value="Photo_RC"/>
    <property type="match status" value="1"/>
</dbReference>
<dbReference type="PRINTS" id="PR00256">
    <property type="entry name" value="REACTNCENTRE"/>
</dbReference>
<dbReference type="SUPFAM" id="SSF81483">
    <property type="entry name" value="Bacterial photosystem II reaction centre, L and M subunits"/>
    <property type="match status" value="1"/>
</dbReference>
<dbReference type="PROSITE" id="PS00244">
    <property type="entry name" value="REACTION_CENTER"/>
    <property type="match status" value="1"/>
</dbReference>
<evidence type="ECO:0000255" key="1">
    <source>
        <dbReference type="HAMAP-Rule" id="MF_01379"/>
    </source>
</evidence>
<evidence type="ECO:0000305" key="2"/>